<name>IDI2_STRPQ</name>
<dbReference type="EC" id="5.3.3.2" evidence="1"/>
<dbReference type="EMBL" id="BA000034">
    <property type="protein sequence ID" value="BAC64350.1"/>
    <property type="molecule type" value="Genomic_DNA"/>
</dbReference>
<dbReference type="RefSeq" id="WP_010922169.1">
    <property type="nucleotide sequence ID" value="NC_004606.1"/>
</dbReference>
<dbReference type="SMR" id="P0DB81"/>
<dbReference type="GeneID" id="69901016"/>
<dbReference type="KEGG" id="sps:SPs1255"/>
<dbReference type="HOGENOM" id="CLU_065515_0_0_9"/>
<dbReference type="GO" id="GO:0005737">
    <property type="term" value="C:cytoplasm"/>
    <property type="evidence" value="ECO:0007669"/>
    <property type="project" value="UniProtKB-SubCell"/>
</dbReference>
<dbReference type="GO" id="GO:0010181">
    <property type="term" value="F:FMN binding"/>
    <property type="evidence" value="ECO:0007669"/>
    <property type="project" value="UniProtKB-UniRule"/>
</dbReference>
<dbReference type="GO" id="GO:0004452">
    <property type="term" value="F:isopentenyl-diphosphate delta-isomerase activity"/>
    <property type="evidence" value="ECO:0007669"/>
    <property type="project" value="UniProtKB-UniRule"/>
</dbReference>
<dbReference type="GO" id="GO:0000287">
    <property type="term" value="F:magnesium ion binding"/>
    <property type="evidence" value="ECO:0007669"/>
    <property type="project" value="UniProtKB-UniRule"/>
</dbReference>
<dbReference type="GO" id="GO:0070402">
    <property type="term" value="F:NADPH binding"/>
    <property type="evidence" value="ECO:0007669"/>
    <property type="project" value="UniProtKB-UniRule"/>
</dbReference>
<dbReference type="GO" id="GO:0016491">
    <property type="term" value="F:oxidoreductase activity"/>
    <property type="evidence" value="ECO:0007669"/>
    <property type="project" value="InterPro"/>
</dbReference>
<dbReference type="GO" id="GO:0008299">
    <property type="term" value="P:isoprenoid biosynthetic process"/>
    <property type="evidence" value="ECO:0007669"/>
    <property type="project" value="UniProtKB-UniRule"/>
</dbReference>
<dbReference type="CDD" id="cd02811">
    <property type="entry name" value="IDI-2_FMN"/>
    <property type="match status" value="1"/>
</dbReference>
<dbReference type="Gene3D" id="3.20.20.70">
    <property type="entry name" value="Aldolase class I"/>
    <property type="match status" value="1"/>
</dbReference>
<dbReference type="HAMAP" id="MF_00354">
    <property type="entry name" value="Idi_2"/>
    <property type="match status" value="1"/>
</dbReference>
<dbReference type="InterPro" id="IPR013785">
    <property type="entry name" value="Aldolase_TIM"/>
</dbReference>
<dbReference type="InterPro" id="IPR000262">
    <property type="entry name" value="FMN-dep_DH"/>
</dbReference>
<dbReference type="InterPro" id="IPR011179">
    <property type="entry name" value="IPdP_isomerase"/>
</dbReference>
<dbReference type="NCBIfam" id="TIGR02151">
    <property type="entry name" value="IPP_isom_2"/>
    <property type="match status" value="1"/>
</dbReference>
<dbReference type="PANTHER" id="PTHR43665">
    <property type="entry name" value="ISOPENTENYL-DIPHOSPHATE DELTA-ISOMERASE"/>
    <property type="match status" value="1"/>
</dbReference>
<dbReference type="PANTHER" id="PTHR43665:SF1">
    <property type="entry name" value="ISOPENTENYL-DIPHOSPHATE DELTA-ISOMERASE"/>
    <property type="match status" value="1"/>
</dbReference>
<dbReference type="Pfam" id="PF01070">
    <property type="entry name" value="FMN_dh"/>
    <property type="match status" value="2"/>
</dbReference>
<dbReference type="PIRSF" id="PIRSF003314">
    <property type="entry name" value="IPP_isomerase"/>
    <property type="match status" value="1"/>
</dbReference>
<dbReference type="SUPFAM" id="SSF51395">
    <property type="entry name" value="FMN-linked oxidoreductases"/>
    <property type="match status" value="1"/>
</dbReference>
<feature type="chain" id="PRO_0000411378" description="Isopentenyl-diphosphate delta-isomerase">
    <location>
        <begin position="1"/>
        <end position="329"/>
    </location>
</feature>
<feature type="binding site" evidence="1">
    <location>
        <begin position="4"/>
        <end position="5"/>
    </location>
    <ligand>
        <name>substrate</name>
    </ligand>
</feature>
<feature type="binding site" evidence="1">
    <location>
        <begin position="59"/>
        <end position="61"/>
    </location>
    <ligand>
        <name>FMN</name>
        <dbReference type="ChEBI" id="CHEBI:58210"/>
    </ligand>
</feature>
<feature type="binding site" evidence="1">
    <location>
        <position position="89"/>
    </location>
    <ligand>
        <name>FMN</name>
        <dbReference type="ChEBI" id="CHEBI:58210"/>
    </ligand>
</feature>
<feature type="binding site" evidence="1">
    <location>
        <position position="116"/>
    </location>
    <ligand>
        <name>FMN</name>
        <dbReference type="ChEBI" id="CHEBI:58210"/>
    </ligand>
</feature>
<feature type="binding site" evidence="1">
    <location>
        <position position="146"/>
    </location>
    <ligand>
        <name>substrate</name>
    </ligand>
</feature>
<feature type="binding site" evidence="1">
    <location>
        <position position="147"/>
    </location>
    <ligand>
        <name>Mg(2+)</name>
        <dbReference type="ChEBI" id="CHEBI:18420"/>
    </ligand>
</feature>
<feature type="binding site" evidence="1">
    <location>
        <position position="178"/>
    </location>
    <ligand>
        <name>FMN</name>
        <dbReference type="ChEBI" id="CHEBI:58210"/>
    </ligand>
</feature>
<feature type="binding site" evidence="1">
    <location>
        <position position="203"/>
    </location>
    <ligand>
        <name>FMN</name>
        <dbReference type="ChEBI" id="CHEBI:58210"/>
    </ligand>
</feature>
<feature type="binding site" evidence="1">
    <location>
        <position position="208"/>
    </location>
    <ligand>
        <name>FMN</name>
        <dbReference type="ChEBI" id="CHEBI:58210"/>
    </ligand>
</feature>
<feature type="binding site" evidence="1">
    <location>
        <begin position="252"/>
        <end position="254"/>
    </location>
    <ligand>
        <name>FMN</name>
        <dbReference type="ChEBI" id="CHEBI:58210"/>
    </ligand>
</feature>
<feature type="binding site" evidence="1">
    <location>
        <begin position="273"/>
        <end position="274"/>
    </location>
    <ligand>
        <name>FMN</name>
        <dbReference type="ChEBI" id="CHEBI:58210"/>
    </ligand>
</feature>
<evidence type="ECO:0000255" key="1">
    <source>
        <dbReference type="HAMAP-Rule" id="MF_00354"/>
    </source>
</evidence>
<accession>P0DB81</accession>
<accession>P65104</accession>
<accession>Q9A095</accession>
<gene>
    <name evidence="1" type="primary">fni</name>
    <name type="ordered locus">SPs1255</name>
</gene>
<organism>
    <name type="scientific">Streptococcus pyogenes serotype M3 (strain SSI-1)</name>
    <dbReference type="NCBI Taxonomy" id="193567"/>
    <lineage>
        <taxon>Bacteria</taxon>
        <taxon>Bacillati</taxon>
        <taxon>Bacillota</taxon>
        <taxon>Bacilli</taxon>
        <taxon>Lactobacillales</taxon>
        <taxon>Streptococcaceae</taxon>
        <taxon>Streptococcus</taxon>
    </lineage>
</organism>
<comment type="function">
    <text evidence="1">Involved in the biosynthesis of isoprenoids. Catalyzes the 1,3-allylic rearrangement of the homoallylic substrate isopentenyl (IPP) to its allylic isomer, dimethylallyl diphosphate (DMAPP).</text>
</comment>
<comment type="catalytic activity">
    <reaction evidence="1">
        <text>isopentenyl diphosphate = dimethylallyl diphosphate</text>
        <dbReference type="Rhea" id="RHEA:23284"/>
        <dbReference type="ChEBI" id="CHEBI:57623"/>
        <dbReference type="ChEBI" id="CHEBI:128769"/>
        <dbReference type="EC" id="5.3.3.2"/>
    </reaction>
</comment>
<comment type="cofactor">
    <cofactor evidence="1">
        <name>FMN</name>
        <dbReference type="ChEBI" id="CHEBI:58210"/>
    </cofactor>
</comment>
<comment type="cofactor">
    <cofactor evidence="1">
        <name>NADPH</name>
        <dbReference type="ChEBI" id="CHEBI:57783"/>
    </cofactor>
</comment>
<comment type="cofactor">
    <cofactor evidence="1">
        <name>Mg(2+)</name>
        <dbReference type="ChEBI" id="CHEBI:18420"/>
    </cofactor>
</comment>
<comment type="subunit">
    <text evidence="1">Homooctamer. Dimer of tetramers.</text>
</comment>
<comment type="subcellular location">
    <subcellularLocation>
        <location evidence="1">Cytoplasm</location>
    </subcellularLocation>
</comment>
<comment type="similarity">
    <text evidence="1">Belongs to the IPP isomerase type 2 family.</text>
</comment>
<reference key="1">
    <citation type="journal article" date="2003" name="Genome Res.">
        <title>Genome sequence of an M3 strain of Streptococcus pyogenes reveals a large-scale genomic rearrangement in invasive strains and new insights into phage evolution.</title>
        <authorList>
            <person name="Nakagawa I."/>
            <person name="Kurokawa K."/>
            <person name="Yamashita A."/>
            <person name="Nakata M."/>
            <person name="Tomiyasu Y."/>
            <person name="Okahashi N."/>
            <person name="Kawabata S."/>
            <person name="Yamazaki K."/>
            <person name="Shiba T."/>
            <person name="Yasunaga T."/>
            <person name="Hayashi H."/>
            <person name="Hattori M."/>
            <person name="Hamada S."/>
        </authorList>
    </citation>
    <scope>NUCLEOTIDE SEQUENCE [LARGE SCALE GENOMIC DNA]</scope>
    <source>
        <strain>SSI-1</strain>
    </source>
</reference>
<protein>
    <recommendedName>
        <fullName evidence="1">Isopentenyl-diphosphate delta-isomerase</fullName>
        <shortName evidence="1">IPP isomerase</shortName>
        <ecNumber evidence="1">5.3.3.2</ecNumber>
    </recommendedName>
    <alternativeName>
        <fullName evidence="1">Isopentenyl diphosphate:dimethylallyl diphosphate isomerase</fullName>
    </alternativeName>
    <alternativeName>
        <fullName evidence="1">Isopentenyl pyrophosphate isomerase</fullName>
    </alternativeName>
    <alternativeName>
        <fullName evidence="1">Type 2 isopentenyl diphosphate isomerase</fullName>
        <shortName evidence="1">IDI-2</shortName>
    </alternativeName>
</protein>
<proteinExistence type="inferred from homology"/>
<keyword id="KW-0963">Cytoplasm</keyword>
<keyword id="KW-0285">Flavoprotein</keyword>
<keyword id="KW-0288">FMN</keyword>
<keyword id="KW-0413">Isomerase</keyword>
<keyword id="KW-0414">Isoprene biosynthesis</keyword>
<keyword id="KW-0460">Magnesium</keyword>
<keyword id="KW-0479">Metal-binding</keyword>
<keyword id="KW-0521">NADP</keyword>
<sequence length="329" mass="36649">MTNRKDDHIKYALKYQSPYNAFDDIELIHHSLPSYDLSDIDLSTHFAGQDFDFPFYINAMTGGSQKGKAVNEKLAKVAAATGIVMVTGSYSAALKNPNDDSYRLHEVADNLKLATNIGLDKPVALGQQTVQEMQPLFLQVHVNVMQELLMPEGERVFHTWKKHLAEYASQIPVPVILKEVGFGMDVNSIKLAHDLGIQTFDISGRGGTSFAYIENQRGGDRSYLNDWGQTTVQCLLNAQGLMDQVEILASGGVRHPLDMIKCFVLGARAVGLSRTVLELVEKYPTERVIAIVNGWKEELKIIMCALDCKTIKELKGVDYLLYGRLQQVN</sequence>